<name>RL30_YEAST</name>
<reference key="1">
    <citation type="journal article" date="1987" name="J. Biol. Chem.">
        <title>The yeast ribosomal protein L32 and its gene.</title>
        <authorList>
            <person name="Dabeva M.D."/>
            <person name="Warner J.R."/>
        </authorList>
    </citation>
    <scope>NUCLEOTIDE SEQUENCE [GENOMIC DNA]</scope>
    <scope>PROTEIN SEQUENCE OF 2-8</scope>
</reference>
<reference key="2">
    <citation type="journal article" date="1997" name="Nature">
        <title>The nucleotide sequence of Saccharomyces cerevisiae chromosome VII.</title>
        <authorList>
            <person name="Tettelin H."/>
            <person name="Agostoni-Carbone M.L."/>
            <person name="Albermann K."/>
            <person name="Albers M."/>
            <person name="Arroyo J."/>
            <person name="Backes U."/>
            <person name="Barreiros T."/>
            <person name="Bertani I."/>
            <person name="Bjourson A.J."/>
            <person name="Brueckner M."/>
            <person name="Bruschi C.V."/>
            <person name="Carignani G."/>
            <person name="Castagnoli L."/>
            <person name="Cerdan E."/>
            <person name="Clemente M.L."/>
            <person name="Coblenz A."/>
            <person name="Coglievina M."/>
            <person name="Coissac E."/>
            <person name="Defoor E."/>
            <person name="Del Bino S."/>
            <person name="Delius H."/>
            <person name="Delneri D."/>
            <person name="de Wergifosse P."/>
            <person name="Dujon B."/>
            <person name="Durand P."/>
            <person name="Entian K.-D."/>
            <person name="Eraso P."/>
            <person name="Escribano V."/>
            <person name="Fabiani L."/>
            <person name="Fartmann B."/>
            <person name="Feroli F."/>
            <person name="Feuermann M."/>
            <person name="Frontali L."/>
            <person name="Garcia-Gonzalez M."/>
            <person name="Garcia-Saez M.I."/>
            <person name="Goffeau A."/>
            <person name="Guerreiro P."/>
            <person name="Hani J."/>
            <person name="Hansen M."/>
            <person name="Hebling U."/>
            <person name="Hernandez K."/>
            <person name="Heumann K."/>
            <person name="Hilger F."/>
            <person name="Hofmann B."/>
            <person name="Indge K.J."/>
            <person name="James C.M."/>
            <person name="Klima R."/>
            <person name="Koetter P."/>
            <person name="Kramer B."/>
            <person name="Kramer W."/>
            <person name="Lauquin G."/>
            <person name="Leuther H."/>
            <person name="Louis E.J."/>
            <person name="Maillier E."/>
            <person name="Marconi A."/>
            <person name="Martegani E."/>
            <person name="Mazon M.J."/>
            <person name="Mazzoni C."/>
            <person name="McReynolds A.D.K."/>
            <person name="Melchioretto P."/>
            <person name="Mewes H.-W."/>
            <person name="Minenkova O."/>
            <person name="Mueller-Auer S."/>
            <person name="Nawrocki A."/>
            <person name="Netter P."/>
            <person name="Neu R."/>
            <person name="Nombela C."/>
            <person name="Oliver S.G."/>
            <person name="Panzeri L."/>
            <person name="Paoluzi S."/>
            <person name="Plevani P."/>
            <person name="Portetelle D."/>
            <person name="Portillo F."/>
            <person name="Potier S."/>
            <person name="Purnelle B."/>
            <person name="Rieger M."/>
            <person name="Riles L."/>
            <person name="Rinaldi T."/>
            <person name="Robben J."/>
            <person name="Rodrigues-Pousada C."/>
            <person name="Rodriguez-Belmonte E."/>
            <person name="Rodriguez-Torres A.M."/>
            <person name="Rose M."/>
            <person name="Ruzzi M."/>
            <person name="Saliola M."/>
            <person name="Sanchez-Perez M."/>
            <person name="Schaefer B."/>
            <person name="Schaefer M."/>
            <person name="Scharfe M."/>
            <person name="Schmidheini T."/>
            <person name="Schreer A."/>
            <person name="Skala J."/>
            <person name="Souciet J.-L."/>
            <person name="Steensma H.Y."/>
            <person name="Talla E."/>
            <person name="Thierry A."/>
            <person name="Vandenbol M."/>
            <person name="van der Aart Q.J.M."/>
            <person name="Van Dyck L."/>
            <person name="Vanoni M."/>
            <person name="Verhasselt P."/>
            <person name="Voet M."/>
            <person name="Volckaert G."/>
            <person name="Wambutt R."/>
            <person name="Watson M.D."/>
            <person name="Weber N."/>
            <person name="Wedler E."/>
            <person name="Wedler H."/>
            <person name="Wipfli P."/>
            <person name="Wolf K."/>
            <person name="Wright L.F."/>
            <person name="Zaccaria P."/>
            <person name="Zimmermann M."/>
            <person name="Zollner A."/>
            <person name="Kleine K."/>
        </authorList>
    </citation>
    <scope>NUCLEOTIDE SEQUENCE [LARGE SCALE GENOMIC DNA]</scope>
    <source>
        <strain>ATCC 204508 / S288c</strain>
    </source>
</reference>
<reference key="3">
    <citation type="journal article" date="2014" name="G3 (Bethesda)">
        <title>The reference genome sequence of Saccharomyces cerevisiae: Then and now.</title>
        <authorList>
            <person name="Engel S.R."/>
            <person name="Dietrich F.S."/>
            <person name="Fisk D.G."/>
            <person name="Binkley G."/>
            <person name="Balakrishnan R."/>
            <person name="Costanzo M.C."/>
            <person name="Dwight S.S."/>
            <person name="Hitz B.C."/>
            <person name="Karra K."/>
            <person name="Nash R.S."/>
            <person name="Weng S."/>
            <person name="Wong E.D."/>
            <person name="Lloyd P."/>
            <person name="Skrzypek M.S."/>
            <person name="Miyasato S.R."/>
            <person name="Simison M."/>
            <person name="Cherry J.M."/>
        </authorList>
    </citation>
    <scope>GENOME REANNOTATION</scope>
    <source>
        <strain>ATCC 204508 / S288c</strain>
    </source>
</reference>
<reference key="4">
    <citation type="journal article" date="1998" name="Yeast">
        <title>The list of cytoplasmic ribosomal proteins of Saccharomyces cerevisiae.</title>
        <authorList>
            <person name="Planta R.J."/>
            <person name="Mager W.H."/>
        </authorList>
    </citation>
    <scope>NOMENCLATURE</scope>
    <scope>SUBUNIT</scope>
</reference>
<reference key="5">
    <citation type="journal article" date="1999" name="J. Biol. Chem.">
        <title>The action of N-terminal acetyltransferases on yeast ribosomal proteins.</title>
        <authorList>
            <person name="Arnold R.J."/>
            <person name="Polevoda B."/>
            <person name="Reilly J.P."/>
            <person name="Sherman F."/>
        </authorList>
    </citation>
    <scope>CLEAVAGE OF INITIATOR METHIONINE</scope>
</reference>
<reference key="6">
    <citation type="journal article" date="2003" name="Nature">
        <title>Global analysis of protein expression in yeast.</title>
        <authorList>
            <person name="Ghaemmaghami S."/>
            <person name="Huh W.-K."/>
            <person name="Bower K."/>
            <person name="Howson R.W."/>
            <person name="Belle A."/>
            <person name="Dephoure N."/>
            <person name="O'Shea E.K."/>
            <person name="Weissman J.S."/>
        </authorList>
    </citation>
    <scope>LEVEL OF PROTEIN EXPRESSION [LARGE SCALE ANALYSIS]</scope>
</reference>
<reference key="7">
    <citation type="journal article" date="2012" name="Proteomics">
        <title>Sites of ubiquitin attachment in Saccharomyces cerevisiae.</title>
        <authorList>
            <person name="Starita L.M."/>
            <person name="Lo R.S."/>
            <person name="Eng J.K."/>
            <person name="von Haller P.D."/>
            <person name="Fields S."/>
        </authorList>
    </citation>
    <scope>UBIQUITINATION [LARGE SCALE ANALYSIS] AT LYS-22; LYS-53 AND LYS-83</scope>
    <scope>IDENTIFICATION BY MASS SPECTROMETRY [LARGE SCALE ANALYSIS]</scope>
</reference>
<reference key="8">
    <citation type="journal article" date="2014" name="Curr. Opin. Struct. Biol.">
        <title>A new system for naming ribosomal proteins.</title>
        <authorList>
            <person name="Ban N."/>
            <person name="Beckmann R."/>
            <person name="Cate J.H.D."/>
            <person name="Dinman J.D."/>
            <person name="Dragon F."/>
            <person name="Ellis S.R."/>
            <person name="Lafontaine D.L.J."/>
            <person name="Lindahl L."/>
            <person name="Liljas A."/>
            <person name="Lipton J.M."/>
            <person name="McAlear M.A."/>
            <person name="Moore P.B."/>
            <person name="Noller H.F."/>
            <person name="Ortega J."/>
            <person name="Panse V.G."/>
            <person name="Ramakrishnan V."/>
            <person name="Spahn C.M.T."/>
            <person name="Steitz T.A."/>
            <person name="Tchorzewski M."/>
            <person name="Tollervey D."/>
            <person name="Warren A.J."/>
            <person name="Williamson J.R."/>
            <person name="Wilson D."/>
            <person name="Yonath A."/>
            <person name="Yusupov M."/>
        </authorList>
    </citation>
    <scope>NOMENCLATURE</scope>
</reference>
<reference key="9">
    <citation type="journal article" date="1999" name="Nat. Struct. Biol.">
        <title>A novel loop-loop recognition motif in the yeast ribosomal protein L30 autoregulatory RNA complex.</title>
        <authorList>
            <person name="Mao H."/>
            <person name="White S.A."/>
            <person name="Williamson J.R."/>
        </authorList>
    </citation>
    <scope>STRUCTURE BY NMR</scope>
</reference>
<reference key="10">
    <citation type="journal article" date="2003" name="J. Mol. Biol.">
        <title>Inherent protein structural flexibility at the RNA-binding interface of L30e.</title>
        <authorList>
            <person name="Chao J.A."/>
            <person name="Prasad G.S."/>
            <person name="White S.A."/>
            <person name="Stout C.D."/>
            <person name="Williamson J.R."/>
        </authorList>
    </citation>
    <scope>X-RAY CRYSTALLOGRAPHY (2.31 ANGSTROMS)</scope>
</reference>
<reference key="11">
    <citation type="journal article" date="2004" name="Structure">
        <title>Joint X-ray and NMR refinement of the yeast L30e-mRNA complex.</title>
        <authorList>
            <person name="Chao J.A."/>
            <person name="Williamson J.R."/>
        </authorList>
    </citation>
    <scope>X-RAY CRYSTALLOGRAPHY (3.24 ANGSTROMS) IN COMPLEX WITH MRNA</scope>
</reference>
<reference key="12">
    <citation type="journal article" date="2010" name="Science">
        <title>Crystal structure of the eukaryotic ribosome.</title>
        <authorList>
            <person name="Ben-Shem A."/>
            <person name="Jenner L."/>
            <person name="Yusupova G."/>
            <person name="Yusupov M."/>
        </authorList>
    </citation>
    <scope>X-RAY CRYSTALLOGRAPHY (4.0 ANGSTROMS) OF 80S RIBOSOME</scope>
</reference>
<reference key="13">
    <citation type="journal article" date="2011" name="Science">
        <title>The structure of the eukaryotic ribosome at 3.0 A resolution.</title>
        <authorList>
            <person name="Ben-Shem A."/>
            <person name="Garreau de Loubresse N."/>
            <person name="Melnikov S."/>
            <person name="Jenner L."/>
            <person name="Yusupova G."/>
            <person name="Yusupov M."/>
        </authorList>
    </citation>
    <scope>X-RAY CRYSTALLOGRAPHY (3.0 ANGSTROMS) OF 80S RIBOSOME</scope>
    <scope>SUBUNIT</scope>
    <scope>SUBCELLULAR LOCATION</scope>
</reference>
<sequence>MAPVKSQESINQKLALVIKSGKYTLGYKSTVKSLRQGKSKLIIIAANTPVLRKSELEYYAMLSKTKVYYFQGGNNELGTAVGKLFRVGVVSILEAGDSDILTTLA</sequence>
<keyword id="KW-0002">3D-structure</keyword>
<keyword id="KW-0963">Cytoplasm</keyword>
<keyword id="KW-0903">Direct protein sequencing</keyword>
<keyword id="KW-1017">Isopeptide bond</keyword>
<keyword id="KW-1185">Reference proteome</keyword>
<keyword id="KW-0687">Ribonucleoprotein</keyword>
<keyword id="KW-0689">Ribosomal protein</keyword>
<keyword id="KW-0832">Ubl conjugation</keyword>
<comment type="function">
    <text evidence="8">Component of the ribosome, a large ribonucleoprotein complex responsible for the synthesis of proteins in the cell. The small ribosomal subunit (SSU) binds messenger RNAs (mRNAs) and translates the encoded message by selecting cognate aminoacyl-transfer RNA (tRNA) molecules. The large subunit (LSU) contains the ribosomal catalytic site termed the peptidyl transferase center (PTC), which catalyzes the formation of peptide bonds, thereby polymerizing the amino acids delivered by tRNAs into a polypeptide chain. The nascent polypeptides leave the ribosome through a tunnel in the LSU and interact with protein factors that function in enzymatic processing, targeting, and the membrane insertion of nascent chains at the exit of the ribosomal tunnel.</text>
</comment>
<comment type="subunit">
    <text evidence="3 9">Component of the large ribosomal subunit (LSU). Mature yeast ribosomes consist of a small (40S) and a large (60S) subunit. The 40S small subunit contains 1 molecule of ribosomal RNA (18S rRNA) and 33 different proteins (encoded by 57 genes). The large 60S subunit contains 3 rRNA molecules (25S, 5.8S and 5S rRNA) and 46 different proteins (encoded by 81 genes) (PubMed:22096102, PubMed:9559554).</text>
</comment>
<comment type="subcellular location">
    <subcellularLocation>
        <location evidence="3">Cytoplasm</location>
    </subcellularLocation>
</comment>
<comment type="miscellaneous">
    <text evidence="2">Present with 59300 molecules/cell in log phase SD medium.</text>
</comment>
<comment type="similarity">
    <text evidence="7">Belongs to the eukaryotic ribosomal protein eL30 family.</text>
</comment>
<feature type="initiator methionine" description="Removed" evidence="1 4">
    <location>
        <position position="1"/>
    </location>
</feature>
<feature type="chain" id="PRO_0000146143" description="Large ribosomal subunit protein eL30">
    <location>
        <begin position="2"/>
        <end position="105"/>
    </location>
</feature>
<feature type="cross-link" description="Glycyl lysine isopeptide (Lys-Gly) (interchain with G-Cter in ubiquitin)" evidence="10">
    <location>
        <position position="22"/>
    </location>
</feature>
<feature type="cross-link" description="Glycyl lysine isopeptide (Lys-Gly) (interchain with G-Cter in ubiquitin)" evidence="10">
    <location>
        <position position="53"/>
    </location>
</feature>
<feature type="cross-link" description="Glycyl lysine isopeptide (Lys-Gly) (interchain with G-Cter in ubiquitin)" evidence="10">
    <location>
        <position position="83"/>
    </location>
</feature>
<feature type="helix" evidence="11">
    <location>
        <begin position="7"/>
        <end position="20"/>
    </location>
</feature>
<feature type="strand" evidence="11">
    <location>
        <begin position="21"/>
        <end position="25"/>
    </location>
</feature>
<feature type="helix" evidence="11">
    <location>
        <begin position="26"/>
        <end position="35"/>
    </location>
</feature>
<feature type="strand" evidence="11">
    <location>
        <begin position="40"/>
        <end position="45"/>
    </location>
</feature>
<feature type="strand" evidence="12">
    <location>
        <begin position="46"/>
        <end position="48"/>
    </location>
</feature>
<feature type="helix" evidence="11">
    <location>
        <begin position="53"/>
        <end position="62"/>
    </location>
</feature>
<feature type="strand" evidence="11">
    <location>
        <begin position="67"/>
        <end position="70"/>
    </location>
</feature>
<feature type="helix" evidence="11">
    <location>
        <begin position="79"/>
        <end position="87"/>
    </location>
</feature>
<feature type="strand" evidence="11">
    <location>
        <begin position="88"/>
        <end position="94"/>
    </location>
</feature>
<feature type="helix" evidence="11">
    <location>
        <begin position="100"/>
        <end position="104"/>
    </location>
</feature>
<dbReference type="EMBL" id="J03457">
    <property type="protein sequence ID" value="AAA35005.1"/>
    <property type="molecule type" value="Genomic_DNA"/>
</dbReference>
<dbReference type="EMBL" id="Z72552">
    <property type="protein sequence ID" value="CAA96731.1"/>
    <property type="molecule type" value="Genomic_DNA"/>
</dbReference>
<dbReference type="EMBL" id="BK006941">
    <property type="protein sequence ID" value="DAA08069.1"/>
    <property type="molecule type" value="Genomic_DNA"/>
</dbReference>
<dbReference type="PIR" id="A29779">
    <property type="entry name" value="R6BY30"/>
</dbReference>
<dbReference type="RefSeq" id="NP_011485.1">
    <property type="nucleotide sequence ID" value="NM_001180895.1"/>
</dbReference>
<dbReference type="PDB" id="1CK2">
    <property type="method" value="NMR"/>
    <property type="chains" value="A=2-105"/>
</dbReference>
<dbReference type="PDB" id="1CN7">
    <property type="method" value="NMR"/>
    <property type="chains" value="A=2-105"/>
</dbReference>
<dbReference type="PDB" id="1NMU">
    <property type="method" value="X-ray"/>
    <property type="resolution" value="2.31 A"/>
    <property type="chains" value="B/D=2-105"/>
</dbReference>
<dbReference type="PDB" id="1T0K">
    <property type="method" value="X-ray"/>
    <property type="resolution" value="3.24 A"/>
    <property type="chains" value="B=1-105"/>
</dbReference>
<dbReference type="PDB" id="3J6X">
    <property type="method" value="EM"/>
    <property type="resolution" value="6.10 A"/>
    <property type="chains" value="70=1-105"/>
</dbReference>
<dbReference type="PDB" id="3J6Y">
    <property type="method" value="EM"/>
    <property type="resolution" value="6.10 A"/>
    <property type="chains" value="70=1-105"/>
</dbReference>
<dbReference type="PDB" id="3J77">
    <property type="method" value="EM"/>
    <property type="resolution" value="6.20 A"/>
    <property type="chains" value="80=1-105"/>
</dbReference>
<dbReference type="PDB" id="3J78">
    <property type="method" value="EM"/>
    <property type="resolution" value="6.30 A"/>
    <property type="chains" value="80=1-105"/>
</dbReference>
<dbReference type="PDB" id="3JCT">
    <property type="method" value="EM"/>
    <property type="resolution" value="3.08 A"/>
    <property type="chains" value="c=1-105"/>
</dbReference>
<dbReference type="PDB" id="4U3M">
    <property type="method" value="X-ray"/>
    <property type="resolution" value="3.00 A"/>
    <property type="chains" value="O0/o0=2-105"/>
</dbReference>
<dbReference type="PDB" id="4U3N">
    <property type="method" value="X-ray"/>
    <property type="resolution" value="3.20 A"/>
    <property type="chains" value="O0/o0=2-105"/>
</dbReference>
<dbReference type="PDB" id="4U3U">
    <property type="method" value="X-ray"/>
    <property type="resolution" value="2.90 A"/>
    <property type="chains" value="O0/o0=2-105"/>
</dbReference>
<dbReference type="PDB" id="4U4N">
    <property type="method" value="X-ray"/>
    <property type="resolution" value="3.10 A"/>
    <property type="chains" value="O0/o0=2-105"/>
</dbReference>
<dbReference type="PDB" id="4U4O">
    <property type="method" value="X-ray"/>
    <property type="resolution" value="3.60 A"/>
    <property type="chains" value="O0/o0=2-105"/>
</dbReference>
<dbReference type="PDB" id="4U4Q">
    <property type="method" value="X-ray"/>
    <property type="resolution" value="3.00 A"/>
    <property type="chains" value="O0/o0=2-105"/>
</dbReference>
<dbReference type="PDB" id="4U4R">
    <property type="method" value="X-ray"/>
    <property type="resolution" value="2.80 A"/>
    <property type="chains" value="O0/o0=2-105"/>
</dbReference>
<dbReference type="PDB" id="4U4U">
    <property type="method" value="X-ray"/>
    <property type="resolution" value="3.00 A"/>
    <property type="chains" value="O0/o0=2-105"/>
</dbReference>
<dbReference type="PDB" id="4U4Y">
    <property type="method" value="X-ray"/>
    <property type="resolution" value="3.20 A"/>
    <property type="chains" value="O0/o0=2-105"/>
</dbReference>
<dbReference type="PDB" id="4U4Z">
    <property type="method" value="X-ray"/>
    <property type="resolution" value="3.10 A"/>
    <property type="chains" value="O0/o0=2-105"/>
</dbReference>
<dbReference type="PDB" id="4U50">
    <property type="method" value="X-ray"/>
    <property type="resolution" value="3.20 A"/>
    <property type="chains" value="O0/o0=2-105"/>
</dbReference>
<dbReference type="PDB" id="4U51">
    <property type="method" value="X-ray"/>
    <property type="resolution" value="3.20 A"/>
    <property type="chains" value="O0/o0=2-105"/>
</dbReference>
<dbReference type="PDB" id="4U52">
    <property type="method" value="X-ray"/>
    <property type="resolution" value="3.00 A"/>
    <property type="chains" value="O0/o0=2-105"/>
</dbReference>
<dbReference type="PDB" id="4U53">
    <property type="method" value="X-ray"/>
    <property type="resolution" value="3.30 A"/>
    <property type="chains" value="O0/o0=2-105"/>
</dbReference>
<dbReference type="PDB" id="4U55">
    <property type="method" value="X-ray"/>
    <property type="resolution" value="3.20 A"/>
    <property type="chains" value="O0/o0=2-105"/>
</dbReference>
<dbReference type="PDB" id="4U56">
    <property type="method" value="X-ray"/>
    <property type="resolution" value="3.45 A"/>
    <property type="chains" value="O0/o0=2-105"/>
</dbReference>
<dbReference type="PDB" id="4U6F">
    <property type="method" value="X-ray"/>
    <property type="resolution" value="3.10 A"/>
    <property type="chains" value="O0/o0=2-105"/>
</dbReference>
<dbReference type="PDB" id="4V5Z">
    <property type="method" value="EM"/>
    <property type="resolution" value="8.70 A"/>
    <property type="chains" value="B6=5-104"/>
</dbReference>
<dbReference type="PDB" id="4V6I">
    <property type="method" value="EM"/>
    <property type="resolution" value="8.80 A"/>
    <property type="chains" value="Bf=1-105"/>
</dbReference>
<dbReference type="PDB" id="4V7F">
    <property type="method" value="EM"/>
    <property type="resolution" value="8.70 A"/>
    <property type="chains" value="b=1-105"/>
</dbReference>
<dbReference type="PDB" id="4V7R">
    <property type="method" value="X-ray"/>
    <property type="resolution" value="4.00 A"/>
    <property type="chains" value="BZ/DZ=1-105"/>
</dbReference>
<dbReference type="PDB" id="4V88">
    <property type="method" value="X-ray"/>
    <property type="resolution" value="3.00 A"/>
    <property type="chains" value="Bc/Dc=1-105"/>
</dbReference>
<dbReference type="PDB" id="4V8T">
    <property type="method" value="EM"/>
    <property type="resolution" value="8.10 A"/>
    <property type="chains" value="c=1-105"/>
</dbReference>
<dbReference type="PDB" id="4V8Y">
    <property type="method" value="EM"/>
    <property type="resolution" value="4.30 A"/>
    <property type="chains" value="Bc=2-105"/>
</dbReference>
<dbReference type="PDB" id="4V8Z">
    <property type="method" value="EM"/>
    <property type="resolution" value="6.60 A"/>
    <property type="chains" value="Bc=2-105"/>
</dbReference>
<dbReference type="PDB" id="4V91">
    <property type="method" value="EM"/>
    <property type="resolution" value="3.70 A"/>
    <property type="chains" value="c=1-105"/>
</dbReference>
<dbReference type="PDB" id="5APN">
    <property type="method" value="EM"/>
    <property type="resolution" value="3.91 A"/>
    <property type="chains" value="c=1-105"/>
</dbReference>
<dbReference type="PDB" id="5APO">
    <property type="method" value="EM"/>
    <property type="resolution" value="3.41 A"/>
    <property type="chains" value="c=1-105"/>
</dbReference>
<dbReference type="PDB" id="5DAT">
    <property type="method" value="X-ray"/>
    <property type="resolution" value="3.15 A"/>
    <property type="chains" value="O0/o0=2-105"/>
</dbReference>
<dbReference type="PDB" id="5DC3">
    <property type="method" value="X-ray"/>
    <property type="resolution" value="3.25 A"/>
    <property type="chains" value="O0/o0=2-105"/>
</dbReference>
<dbReference type="PDB" id="5DGE">
    <property type="method" value="X-ray"/>
    <property type="resolution" value="3.45 A"/>
    <property type="chains" value="O0/o0=2-105"/>
</dbReference>
<dbReference type="PDB" id="5DGF">
    <property type="method" value="X-ray"/>
    <property type="resolution" value="3.30 A"/>
    <property type="chains" value="O0/o0=2-105"/>
</dbReference>
<dbReference type="PDB" id="5DGV">
    <property type="method" value="X-ray"/>
    <property type="resolution" value="3.10 A"/>
    <property type="chains" value="O0/o0=2-105"/>
</dbReference>
<dbReference type="PDB" id="5FCI">
    <property type="method" value="X-ray"/>
    <property type="resolution" value="3.40 A"/>
    <property type="chains" value="O0/o0=2-105"/>
</dbReference>
<dbReference type="PDB" id="5FCJ">
    <property type="method" value="X-ray"/>
    <property type="resolution" value="3.10 A"/>
    <property type="chains" value="O0/o0=2-105"/>
</dbReference>
<dbReference type="PDB" id="5GAK">
    <property type="method" value="EM"/>
    <property type="resolution" value="3.88 A"/>
    <property type="chains" value="e=1-105"/>
</dbReference>
<dbReference type="PDB" id="5H4P">
    <property type="method" value="EM"/>
    <property type="resolution" value="3.07 A"/>
    <property type="chains" value="c=1-105"/>
</dbReference>
<dbReference type="PDB" id="5I4L">
    <property type="method" value="X-ray"/>
    <property type="resolution" value="3.10 A"/>
    <property type="chains" value="O0/o0=6-105"/>
</dbReference>
<dbReference type="PDB" id="5JCS">
    <property type="method" value="EM"/>
    <property type="resolution" value="9.50 A"/>
    <property type="chains" value="c=1-105"/>
</dbReference>
<dbReference type="PDB" id="5JUO">
    <property type="method" value="EM"/>
    <property type="resolution" value="4.00 A"/>
    <property type="chains" value="HA=1-105"/>
</dbReference>
<dbReference type="PDB" id="5JUP">
    <property type="method" value="EM"/>
    <property type="resolution" value="3.50 A"/>
    <property type="chains" value="HA=1-105"/>
</dbReference>
<dbReference type="PDB" id="5JUS">
    <property type="method" value="EM"/>
    <property type="resolution" value="4.20 A"/>
    <property type="chains" value="HA=1-105"/>
</dbReference>
<dbReference type="PDB" id="5JUT">
    <property type="method" value="EM"/>
    <property type="resolution" value="4.00 A"/>
    <property type="chains" value="HA=1-105"/>
</dbReference>
<dbReference type="PDB" id="5JUU">
    <property type="method" value="EM"/>
    <property type="resolution" value="4.00 A"/>
    <property type="chains" value="HA=1-105"/>
</dbReference>
<dbReference type="PDB" id="5LYB">
    <property type="method" value="X-ray"/>
    <property type="resolution" value="3.25 A"/>
    <property type="chains" value="O0/o0=6-105"/>
</dbReference>
<dbReference type="PDB" id="5M1J">
    <property type="method" value="EM"/>
    <property type="resolution" value="3.30 A"/>
    <property type="chains" value="c5=9-105"/>
</dbReference>
<dbReference type="PDB" id="5MC6">
    <property type="method" value="EM"/>
    <property type="resolution" value="3.80 A"/>
    <property type="chains" value="AY=1-105"/>
</dbReference>
<dbReference type="PDB" id="5MEI">
    <property type="method" value="X-ray"/>
    <property type="resolution" value="3.50 A"/>
    <property type="chains" value="AD/DE=9-105"/>
</dbReference>
<dbReference type="PDB" id="5NDG">
    <property type="method" value="X-ray"/>
    <property type="resolution" value="3.70 A"/>
    <property type="chains" value="O0/o0=6-105"/>
</dbReference>
<dbReference type="PDB" id="5NDV">
    <property type="method" value="X-ray"/>
    <property type="resolution" value="3.30 A"/>
    <property type="chains" value="O0/o0=6-105"/>
</dbReference>
<dbReference type="PDB" id="5NDW">
    <property type="method" value="X-ray"/>
    <property type="resolution" value="3.70 A"/>
    <property type="chains" value="O0/o0=6-105"/>
</dbReference>
<dbReference type="PDB" id="5OBM">
    <property type="method" value="X-ray"/>
    <property type="resolution" value="3.40 A"/>
    <property type="chains" value="O0/o0=6-105"/>
</dbReference>
<dbReference type="PDB" id="5ON6">
    <property type="method" value="X-ray"/>
    <property type="resolution" value="3.10 A"/>
    <property type="chains" value="AD/DE=9-105"/>
</dbReference>
<dbReference type="PDB" id="5T62">
    <property type="method" value="EM"/>
    <property type="resolution" value="3.30 A"/>
    <property type="chains" value="p=1-105"/>
</dbReference>
<dbReference type="PDB" id="5T6R">
    <property type="method" value="EM"/>
    <property type="resolution" value="4.50 A"/>
    <property type="chains" value="p=1-105"/>
</dbReference>
<dbReference type="PDB" id="5TBW">
    <property type="method" value="X-ray"/>
    <property type="resolution" value="3.00 A"/>
    <property type="chains" value="AD/DE=9-105"/>
</dbReference>
<dbReference type="PDB" id="5TGA">
    <property type="method" value="X-ray"/>
    <property type="resolution" value="3.30 A"/>
    <property type="chains" value="O0/o0=6-105"/>
</dbReference>
<dbReference type="PDB" id="5TGM">
    <property type="method" value="X-ray"/>
    <property type="resolution" value="3.50 A"/>
    <property type="chains" value="O0/o0=6-105"/>
</dbReference>
<dbReference type="PDB" id="6CB1">
    <property type="method" value="EM"/>
    <property type="resolution" value="4.60 A"/>
    <property type="chains" value="c=1-105"/>
</dbReference>
<dbReference type="PDB" id="6ELZ">
    <property type="method" value="EM"/>
    <property type="resolution" value="3.30 A"/>
    <property type="chains" value="c=1-105"/>
</dbReference>
<dbReference type="PDB" id="6EM5">
    <property type="method" value="EM"/>
    <property type="resolution" value="4.30 A"/>
    <property type="chains" value="c=1-105"/>
</dbReference>
<dbReference type="PDB" id="6FT6">
    <property type="method" value="EM"/>
    <property type="resolution" value="3.90 A"/>
    <property type="chains" value="c=1-105"/>
</dbReference>
<dbReference type="PDB" id="6GQ1">
    <property type="method" value="EM"/>
    <property type="resolution" value="4.40 A"/>
    <property type="chains" value="c=9-105"/>
</dbReference>
<dbReference type="PDB" id="6GQB">
    <property type="method" value="EM"/>
    <property type="resolution" value="3.90 A"/>
    <property type="chains" value="c=9-105"/>
</dbReference>
<dbReference type="PDB" id="6GQV">
    <property type="method" value="EM"/>
    <property type="resolution" value="4.00 A"/>
    <property type="chains" value="c=9-105"/>
</dbReference>
<dbReference type="PDB" id="6HD7">
    <property type="method" value="EM"/>
    <property type="resolution" value="3.40 A"/>
    <property type="chains" value="e=1-105"/>
</dbReference>
<dbReference type="PDB" id="6HHQ">
    <property type="method" value="X-ray"/>
    <property type="resolution" value="3.10 A"/>
    <property type="chains" value="AD/DE=1-105"/>
</dbReference>
<dbReference type="PDB" id="6I7O">
    <property type="method" value="EM"/>
    <property type="resolution" value="5.30 A"/>
    <property type="chains" value="AY/XY=6-105"/>
</dbReference>
<dbReference type="PDB" id="6M62">
    <property type="method" value="EM"/>
    <property type="resolution" value="3.20 A"/>
    <property type="chains" value="c=1-105"/>
</dbReference>
<dbReference type="PDB" id="6N8J">
    <property type="method" value="EM"/>
    <property type="resolution" value="3.50 A"/>
    <property type="chains" value="c=1-105"/>
</dbReference>
<dbReference type="PDB" id="6N8K">
    <property type="method" value="EM"/>
    <property type="resolution" value="3.60 A"/>
    <property type="chains" value="c=1-105"/>
</dbReference>
<dbReference type="PDB" id="6N8L">
    <property type="method" value="EM"/>
    <property type="resolution" value="3.60 A"/>
    <property type="chains" value="c=1-105"/>
</dbReference>
<dbReference type="PDB" id="6N8M">
    <property type="method" value="EM"/>
    <property type="resolution" value="3.50 A"/>
    <property type="chains" value="p=1-105"/>
</dbReference>
<dbReference type="PDB" id="6N8N">
    <property type="method" value="EM"/>
    <property type="resolution" value="3.80 A"/>
    <property type="chains" value="p=1-105"/>
</dbReference>
<dbReference type="PDB" id="6N8O">
    <property type="method" value="EM"/>
    <property type="resolution" value="3.50 A"/>
    <property type="chains" value="p=1-105"/>
</dbReference>
<dbReference type="PDB" id="6OIG">
    <property type="method" value="EM"/>
    <property type="resolution" value="3.80 A"/>
    <property type="chains" value="c=9-105"/>
</dbReference>
<dbReference type="PDB" id="6Q8Y">
    <property type="method" value="EM"/>
    <property type="resolution" value="3.10 A"/>
    <property type="chains" value="AY=9-105"/>
</dbReference>
<dbReference type="PDB" id="6QIK">
    <property type="method" value="EM"/>
    <property type="resolution" value="3.10 A"/>
    <property type="chains" value="c=1-105"/>
</dbReference>
<dbReference type="PDB" id="6QT0">
    <property type="method" value="EM"/>
    <property type="resolution" value="3.40 A"/>
    <property type="chains" value="c=1-105"/>
</dbReference>
<dbReference type="PDB" id="6QTZ">
    <property type="method" value="EM"/>
    <property type="resolution" value="3.50 A"/>
    <property type="chains" value="c=1-105"/>
</dbReference>
<dbReference type="PDB" id="6R84">
    <property type="method" value="EM"/>
    <property type="resolution" value="3.60 A"/>
    <property type="chains" value="e=9-105"/>
</dbReference>
<dbReference type="PDB" id="6R86">
    <property type="method" value="EM"/>
    <property type="resolution" value="3.40 A"/>
    <property type="chains" value="e=9-105"/>
</dbReference>
<dbReference type="PDB" id="6R87">
    <property type="method" value="EM"/>
    <property type="resolution" value="3.40 A"/>
    <property type="chains" value="e=9-105"/>
</dbReference>
<dbReference type="PDB" id="6RI5">
    <property type="method" value="EM"/>
    <property type="resolution" value="3.30 A"/>
    <property type="chains" value="c=1-105"/>
</dbReference>
<dbReference type="PDB" id="6RZZ">
    <property type="method" value="EM"/>
    <property type="resolution" value="3.20 A"/>
    <property type="chains" value="c=1-105"/>
</dbReference>
<dbReference type="PDB" id="6S05">
    <property type="method" value="EM"/>
    <property type="resolution" value="3.90 A"/>
    <property type="chains" value="c=1-105"/>
</dbReference>
<dbReference type="PDB" id="6S47">
    <property type="method" value="EM"/>
    <property type="resolution" value="3.28 A"/>
    <property type="chains" value="Ae=2-105"/>
</dbReference>
<dbReference type="PDB" id="6SNT">
    <property type="method" value="EM"/>
    <property type="resolution" value="2.80 A"/>
    <property type="chains" value="an=1-105"/>
</dbReference>
<dbReference type="PDB" id="6SV4">
    <property type="method" value="EM"/>
    <property type="resolution" value="3.30 A"/>
    <property type="chains" value="AY/XY/zY=1-105"/>
</dbReference>
<dbReference type="PDB" id="6T4Q">
    <property type="method" value="EM"/>
    <property type="resolution" value="2.60 A"/>
    <property type="chains" value="Lc=9-104"/>
</dbReference>
<dbReference type="PDB" id="6T7I">
    <property type="method" value="EM"/>
    <property type="resolution" value="3.20 A"/>
    <property type="chains" value="Lc=1-105"/>
</dbReference>
<dbReference type="PDB" id="6T7T">
    <property type="method" value="EM"/>
    <property type="resolution" value="3.10 A"/>
    <property type="chains" value="Lc=1-105"/>
</dbReference>
<dbReference type="PDB" id="6T83">
    <property type="method" value="EM"/>
    <property type="resolution" value="4.00 A"/>
    <property type="chains" value="N/cy=1-105"/>
</dbReference>
<dbReference type="PDB" id="6TB3">
    <property type="method" value="EM"/>
    <property type="resolution" value="2.80 A"/>
    <property type="chains" value="AY=9-104"/>
</dbReference>
<dbReference type="PDB" id="6TNU">
    <property type="method" value="EM"/>
    <property type="resolution" value="3.10 A"/>
    <property type="chains" value="AY=9-104"/>
</dbReference>
<dbReference type="PDB" id="6WOO">
    <property type="method" value="EM"/>
    <property type="resolution" value="2.90 A"/>
    <property type="chains" value="c=9-105"/>
</dbReference>
<dbReference type="PDB" id="6XIQ">
    <property type="method" value="EM"/>
    <property type="resolution" value="4.20 A"/>
    <property type="chains" value="c=1-105"/>
</dbReference>
<dbReference type="PDB" id="6XIR">
    <property type="method" value="EM"/>
    <property type="resolution" value="3.20 A"/>
    <property type="chains" value="c=1-105"/>
</dbReference>
<dbReference type="PDB" id="6YLG">
    <property type="method" value="EM"/>
    <property type="resolution" value="3.00 A"/>
    <property type="chains" value="n=1-105"/>
</dbReference>
<dbReference type="PDB" id="6YLH">
    <property type="method" value="EM"/>
    <property type="resolution" value="3.10 A"/>
    <property type="chains" value="n=1-105"/>
</dbReference>
<dbReference type="PDB" id="6YLX">
    <property type="method" value="EM"/>
    <property type="resolution" value="3.90 A"/>
    <property type="chains" value="c=1-105"/>
</dbReference>
<dbReference type="PDB" id="6YLY">
    <property type="method" value="EM"/>
    <property type="resolution" value="3.80 A"/>
    <property type="chains" value="c=1-105"/>
</dbReference>
<dbReference type="PDB" id="6Z6J">
    <property type="method" value="EM"/>
    <property type="resolution" value="3.40 A"/>
    <property type="chains" value="Lc=1-105"/>
</dbReference>
<dbReference type="PDB" id="6Z6K">
    <property type="method" value="EM"/>
    <property type="resolution" value="3.40 A"/>
    <property type="chains" value="Lc=1-105"/>
</dbReference>
<dbReference type="PDB" id="7B7D">
    <property type="method" value="EM"/>
    <property type="resolution" value="3.30 A"/>
    <property type="chains" value="LY=9-104"/>
</dbReference>
<dbReference type="PDB" id="7BT6">
    <property type="method" value="EM"/>
    <property type="resolution" value="3.12 A"/>
    <property type="chains" value="c=1-105"/>
</dbReference>
<dbReference type="PDB" id="7BTB">
    <property type="method" value="EM"/>
    <property type="resolution" value="3.22 A"/>
    <property type="chains" value="c=1-105"/>
</dbReference>
<dbReference type="PDB" id="7MPI">
    <property type="method" value="EM"/>
    <property type="resolution" value="3.05 A"/>
    <property type="chains" value="Ac=9-105"/>
</dbReference>
<dbReference type="PDB" id="7MPJ">
    <property type="method" value="EM"/>
    <property type="resolution" value="2.70 A"/>
    <property type="chains" value="Ac=9-105"/>
</dbReference>
<dbReference type="PDB" id="7N8B">
    <property type="method" value="EM"/>
    <property type="resolution" value="3.05 A"/>
    <property type="chains" value="Ac=9-105"/>
</dbReference>
<dbReference type="PDB" id="7NAC">
    <property type="method" value="EM"/>
    <property type="resolution" value="3.04 A"/>
    <property type="chains" value="c=1-105"/>
</dbReference>
<dbReference type="PDB" id="7NAD">
    <property type="method" value="EM"/>
    <property type="resolution" value="3.04 A"/>
    <property type="chains" value="c=1-105"/>
</dbReference>
<dbReference type="PDB" id="7NAF">
    <property type="method" value="EM"/>
    <property type="resolution" value="3.13 A"/>
    <property type="chains" value="c=42-91"/>
</dbReference>
<dbReference type="PDB" id="7NRC">
    <property type="method" value="EM"/>
    <property type="resolution" value="3.90 A"/>
    <property type="chains" value="Le=9-104"/>
</dbReference>
<dbReference type="PDB" id="7NRD">
    <property type="method" value="EM"/>
    <property type="resolution" value="4.36 A"/>
    <property type="chains" value="Le=9-104"/>
</dbReference>
<dbReference type="PDB" id="7OF1">
    <property type="method" value="EM"/>
    <property type="resolution" value="3.10 A"/>
    <property type="chains" value="c=1-105"/>
</dbReference>
<dbReference type="PDB" id="7OH3">
    <property type="method" value="EM"/>
    <property type="resolution" value="3.40 A"/>
    <property type="chains" value="c=1-105"/>
</dbReference>
<dbReference type="PDB" id="7OHQ">
    <property type="method" value="EM"/>
    <property type="resolution" value="3.10 A"/>
    <property type="chains" value="c=1-105"/>
</dbReference>
<dbReference type="PDB" id="7OHR">
    <property type="method" value="EM"/>
    <property type="resolution" value="4.72 A"/>
    <property type="chains" value="c=1-105"/>
</dbReference>
<dbReference type="PDB" id="7R72">
    <property type="method" value="EM"/>
    <property type="resolution" value="3.07 A"/>
    <property type="chains" value="c=1-105"/>
</dbReference>
<dbReference type="PDB" id="7R7A">
    <property type="method" value="EM"/>
    <property type="resolution" value="3.04 A"/>
    <property type="chains" value="c=1-105"/>
</dbReference>
<dbReference type="PDB" id="7RR5">
    <property type="method" value="EM"/>
    <property type="resolution" value="3.23 A"/>
    <property type="chains" value="Lc=1-105"/>
</dbReference>
<dbReference type="PDB" id="7TOO">
    <property type="method" value="EM"/>
    <property type="resolution" value="2.70 A"/>
    <property type="chains" value="AL30=1-105"/>
</dbReference>
<dbReference type="PDB" id="7TOP">
    <property type="method" value="EM"/>
    <property type="resolution" value="2.40 A"/>
    <property type="chains" value="AL30=1-105"/>
</dbReference>
<dbReference type="PDB" id="7U0H">
    <property type="method" value="EM"/>
    <property type="resolution" value="2.76 A"/>
    <property type="chains" value="c=1-105"/>
</dbReference>
<dbReference type="PDB" id="7UG6">
    <property type="method" value="EM"/>
    <property type="resolution" value="2.90 A"/>
    <property type="chains" value="7=1-105"/>
</dbReference>
<dbReference type="PDB" id="7UOO">
    <property type="method" value="EM"/>
    <property type="resolution" value="2.34 A"/>
    <property type="chains" value="c=1-105"/>
</dbReference>
<dbReference type="PDB" id="7UQB">
    <property type="method" value="EM"/>
    <property type="resolution" value="2.43 A"/>
    <property type="chains" value="c=1-105"/>
</dbReference>
<dbReference type="PDB" id="7UQZ">
    <property type="method" value="EM"/>
    <property type="resolution" value="2.44 A"/>
    <property type="chains" value="c=1-105"/>
</dbReference>
<dbReference type="PDB" id="7V08">
    <property type="method" value="EM"/>
    <property type="resolution" value="2.36 A"/>
    <property type="chains" value="c=1-105"/>
</dbReference>
<dbReference type="PDB" id="7Z34">
    <property type="method" value="EM"/>
    <property type="resolution" value="3.80 A"/>
    <property type="chains" value="c=1-105"/>
</dbReference>
<dbReference type="PDB" id="7ZPQ">
    <property type="method" value="EM"/>
    <property type="resolution" value="3.47 A"/>
    <property type="chains" value="Bb=9-104"/>
</dbReference>
<dbReference type="PDB" id="7ZRS">
    <property type="method" value="EM"/>
    <property type="resolution" value="4.80 A"/>
    <property type="chains" value="Bb=9-104"/>
</dbReference>
<dbReference type="PDB" id="7ZS5">
    <property type="method" value="EM"/>
    <property type="resolution" value="3.20 A"/>
    <property type="chains" value="Bd=9-105"/>
</dbReference>
<dbReference type="PDB" id="7ZUW">
    <property type="method" value="EM"/>
    <property type="resolution" value="4.30 A"/>
    <property type="chains" value="Bb=9-104"/>
</dbReference>
<dbReference type="PDB" id="7ZUX">
    <property type="method" value="EM"/>
    <property type="resolution" value="2.50 A"/>
    <property type="chains" value="Eb=9-104"/>
</dbReference>
<dbReference type="PDB" id="7ZW0">
    <property type="method" value="EM"/>
    <property type="resolution" value="2.40 A"/>
    <property type="chains" value="Lf=1-105"/>
</dbReference>
<dbReference type="PDB" id="8AAF">
    <property type="method" value="EM"/>
    <property type="resolution" value="2.50 A"/>
    <property type="chains" value="P=1-105"/>
</dbReference>
<dbReference type="PDB" id="8AGT">
    <property type="method" value="EM"/>
    <property type="resolution" value="2.60 A"/>
    <property type="chains" value="P=1-105"/>
</dbReference>
<dbReference type="PDB" id="8AGU">
    <property type="method" value="EM"/>
    <property type="resolution" value="2.70 A"/>
    <property type="chains" value="P=1-105"/>
</dbReference>
<dbReference type="PDB" id="8AGV">
    <property type="method" value="EM"/>
    <property type="resolution" value="2.60 A"/>
    <property type="chains" value="P=1-105"/>
</dbReference>
<dbReference type="PDB" id="8AGW">
    <property type="method" value="EM"/>
    <property type="resolution" value="2.60 A"/>
    <property type="chains" value="P=1-105"/>
</dbReference>
<dbReference type="PDB" id="8AGX">
    <property type="method" value="EM"/>
    <property type="resolution" value="2.40 A"/>
    <property type="chains" value="P=1-105"/>
</dbReference>
<dbReference type="PDB" id="8AGZ">
    <property type="method" value="EM"/>
    <property type="resolution" value="2.60 A"/>
    <property type="chains" value="P=1-105"/>
</dbReference>
<dbReference type="PDB" id="8BIP">
    <property type="method" value="EM"/>
    <property type="resolution" value="3.10 A"/>
    <property type="chains" value="Lc=9-104"/>
</dbReference>
<dbReference type="PDB" id="8BJQ">
    <property type="method" value="EM"/>
    <property type="resolution" value="3.80 A"/>
    <property type="chains" value="Lc=9-104"/>
</dbReference>
<dbReference type="PDB" id="8BN3">
    <property type="method" value="EM"/>
    <property type="resolution" value="2.40 A"/>
    <property type="chains" value="O0=9-105"/>
</dbReference>
<dbReference type="PDB" id="8BQD">
    <property type="method" value="EM"/>
    <property type="resolution" value="3.90 A"/>
    <property type="chains" value="AY=9-104"/>
</dbReference>
<dbReference type="PDB" id="8BQX">
    <property type="method" value="EM"/>
    <property type="resolution" value="3.80 A"/>
    <property type="chains" value="AY=9-104"/>
</dbReference>
<dbReference type="PDB" id="8CCS">
    <property type="method" value="EM"/>
    <property type="resolution" value="1.97 A"/>
    <property type="chains" value="O=1-105"/>
</dbReference>
<dbReference type="PDB" id="8CDL">
    <property type="method" value="EM"/>
    <property type="resolution" value="2.72 A"/>
    <property type="chains" value="O=1-105"/>
</dbReference>
<dbReference type="PDB" id="8CDR">
    <property type="method" value="EM"/>
    <property type="resolution" value="2.04 A"/>
    <property type="chains" value="O=1-105"/>
</dbReference>
<dbReference type="PDB" id="8CEH">
    <property type="method" value="EM"/>
    <property type="resolution" value="2.05 A"/>
    <property type="chains" value="O=1-105"/>
</dbReference>
<dbReference type="PDB" id="8CF5">
    <property type="method" value="EM"/>
    <property type="resolution" value="2.71 A"/>
    <property type="chains" value="O=1-105"/>
</dbReference>
<dbReference type="PDB" id="8CG8">
    <property type="method" value="EM"/>
    <property type="resolution" value="2.57 A"/>
    <property type="chains" value="O=1-105"/>
</dbReference>
<dbReference type="PDB" id="8CGN">
    <property type="method" value="EM"/>
    <property type="resolution" value="2.28 A"/>
    <property type="chains" value="O=1-105"/>
</dbReference>
<dbReference type="PDB" id="8CIV">
    <property type="method" value="EM"/>
    <property type="resolution" value="2.47 A"/>
    <property type="chains" value="O=1-105"/>
</dbReference>
<dbReference type="PDB" id="8CKU">
    <property type="method" value="EM"/>
    <property type="resolution" value="3.11 A"/>
    <property type="chains" value="O=1-105"/>
</dbReference>
<dbReference type="PDB" id="8CMJ">
    <property type="method" value="EM"/>
    <property type="resolution" value="3.79 A"/>
    <property type="chains" value="O=1-105"/>
</dbReference>
<dbReference type="PDB" id="8EUB">
    <property type="method" value="EM"/>
    <property type="resolution" value="2.52 A"/>
    <property type="chains" value="Ac=1-105"/>
</dbReference>
<dbReference type="PDB" id="8EVP">
    <property type="method" value="EM"/>
    <property type="resolution" value="2.38 A"/>
    <property type="chains" value="Ac=1-105"/>
</dbReference>
<dbReference type="PDB" id="8EVQ">
    <property type="method" value="EM"/>
    <property type="resolution" value="2.72 A"/>
    <property type="chains" value="Ac=1-105"/>
</dbReference>
<dbReference type="PDB" id="8EVR">
    <property type="method" value="EM"/>
    <property type="resolution" value="2.87 A"/>
    <property type="chains" value="Ac=1-105"/>
</dbReference>
<dbReference type="PDB" id="8EVS">
    <property type="method" value="EM"/>
    <property type="resolution" value="2.62 A"/>
    <property type="chains" value="Ac=1-105"/>
</dbReference>
<dbReference type="PDB" id="8EVT">
    <property type="method" value="EM"/>
    <property type="resolution" value="2.20 A"/>
    <property type="chains" value="Ac=1-105"/>
</dbReference>
<dbReference type="PDB" id="8EWB">
    <property type="method" value="EM"/>
    <property type="resolution" value="2.87 A"/>
    <property type="chains" value="Ac=1-105"/>
</dbReference>
<dbReference type="PDB" id="8EWC">
    <property type="method" value="EM"/>
    <property type="resolution" value="2.45 A"/>
    <property type="chains" value="Ac=1-105"/>
</dbReference>
<dbReference type="PDB" id="8HFR">
    <property type="method" value="EM"/>
    <property type="resolution" value="2.64 A"/>
    <property type="chains" value="cC=1-105"/>
</dbReference>
<dbReference type="PDB" id="8K2D">
    <property type="method" value="EM"/>
    <property type="resolution" value="3.20 A"/>
    <property type="chains" value="Lc=1-105"/>
</dbReference>
<dbReference type="PDB" id="8K82">
    <property type="method" value="EM"/>
    <property type="resolution" value="3.00 A"/>
    <property type="chains" value="Lc=1-105"/>
</dbReference>
<dbReference type="PDB" id="8P4V">
    <property type="method" value="X-ray"/>
    <property type="resolution" value="3.16 A"/>
    <property type="chains" value="AD/DE=1-105"/>
</dbReference>
<dbReference type="PDB" id="8P8M">
    <property type="method" value="EM"/>
    <property type="resolution" value="2.66 A"/>
    <property type="chains" value="RC=1-105"/>
</dbReference>
<dbReference type="PDB" id="8P8N">
    <property type="method" value="EM"/>
    <property type="resolution" value="2.15 A"/>
    <property type="chains" value="RC=1-105"/>
</dbReference>
<dbReference type="PDB" id="8P8U">
    <property type="method" value="EM"/>
    <property type="resolution" value="2.23 A"/>
    <property type="chains" value="RC=1-105"/>
</dbReference>
<dbReference type="PDB" id="8P9A">
    <property type="method" value="X-ray"/>
    <property type="resolution" value="2.90 A"/>
    <property type="chains" value="AD/DE=1-105"/>
</dbReference>
<dbReference type="PDB" id="8PFR">
    <property type="method" value="EM"/>
    <property type="resolution" value="2.15 A"/>
    <property type="chains" value="RC=1-105"/>
</dbReference>
<dbReference type="PDB" id="8T2X">
    <property type="method" value="EM"/>
    <property type="resolution" value="2.46 A"/>
    <property type="chains" value="Ac=1-105"/>
</dbReference>
<dbReference type="PDB" id="8T2Y">
    <property type="method" value="EM"/>
    <property type="resolution" value="2.20 A"/>
    <property type="chains" value="Ac=1-105"/>
</dbReference>
<dbReference type="PDB" id="8T2Z">
    <property type="method" value="EM"/>
    <property type="resolution" value="2.40 A"/>
    <property type="chains" value="Ac=1-105"/>
</dbReference>
<dbReference type="PDB" id="8T30">
    <property type="method" value="EM"/>
    <property type="resolution" value="2.88 A"/>
    <property type="chains" value="Ac=1-105"/>
</dbReference>
<dbReference type="PDB" id="8T3A">
    <property type="method" value="EM"/>
    <property type="resolution" value="2.86 A"/>
    <property type="chains" value="Ac=1-105"/>
</dbReference>
<dbReference type="PDB" id="8T3B">
    <property type="method" value="EM"/>
    <property type="resolution" value="3.08 A"/>
    <property type="chains" value="Ac=1-105"/>
</dbReference>
<dbReference type="PDB" id="8T3C">
    <property type="method" value="EM"/>
    <property type="resolution" value="3.86 A"/>
    <property type="chains" value="Ac=1-105"/>
</dbReference>
<dbReference type="PDB" id="8T3D">
    <property type="method" value="EM"/>
    <property type="resolution" value="2.95 A"/>
    <property type="chains" value="Ac=1-105"/>
</dbReference>
<dbReference type="PDB" id="8T3E">
    <property type="method" value="EM"/>
    <property type="resolution" value="3.04 A"/>
    <property type="chains" value="Ac=1-105"/>
</dbReference>
<dbReference type="PDB" id="8T3F">
    <property type="method" value="EM"/>
    <property type="resolution" value="3.09 A"/>
    <property type="chains" value="Ac=1-105"/>
</dbReference>
<dbReference type="PDB" id="8UT0">
    <property type="method" value="EM"/>
    <property type="resolution" value="3.22 A"/>
    <property type="chains" value="Le=9-104"/>
</dbReference>
<dbReference type="PDB" id="8UTI">
    <property type="method" value="EM"/>
    <property type="resolution" value="3.13 A"/>
    <property type="chains" value="Le=9-104"/>
</dbReference>
<dbReference type="PDB" id="8V87">
    <property type="method" value="EM"/>
    <property type="resolution" value="2.66 A"/>
    <property type="chains" value="c=1-105"/>
</dbReference>
<dbReference type="PDB" id="8XU8">
    <property type="method" value="EM"/>
    <property type="resolution" value="3.40 A"/>
    <property type="chains" value="e=9-104"/>
</dbReference>
<dbReference type="PDB" id="8Y0U">
    <property type="method" value="EM"/>
    <property type="resolution" value="3.59 A"/>
    <property type="chains" value="Lc=1-105"/>
</dbReference>
<dbReference type="PDB" id="8YLD">
    <property type="method" value="EM"/>
    <property type="resolution" value="3.90 A"/>
    <property type="chains" value="e=9-104"/>
</dbReference>
<dbReference type="PDB" id="8YLR">
    <property type="method" value="EM"/>
    <property type="resolution" value="3.90 A"/>
    <property type="chains" value="e=9-104"/>
</dbReference>
<dbReference type="PDB" id="8Z70">
    <property type="method" value="EM"/>
    <property type="resolution" value="3.20 A"/>
    <property type="chains" value="e=9-104"/>
</dbReference>
<dbReference type="PDB" id="8Z71">
    <property type="method" value="EM"/>
    <property type="resolution" value="3.60 A"/>
    <property type="chains" value="e=9-104"/>
</dbReference>
<dbReference type="PDB" id="9F9S">
    <property type="method" value="EM"/>
    <property type="resolution" value="2.90 A"/>
    <property type="chains" value="Lo/Mo=1-105"/>
</dbReference>
<dbReference type="PDBsum" id="1CK2"/>
<dbReference type="PDBsum" id="1CN7"/>
<dbReference type="PDBsum" id="1NMU"/>
<dbReference type="PDBsum" id="1T0K"/>
<dbReference type="PDBsum" id="3J6X"/>
<dbReference type="PDBsum" id="3J6Y"/>
<dbReference type="PDBsum" id="3J77"/>
<dbReference type="PDBsum" id="3J78"/>
<dbReference type="PDBsum" id="3JCT"/>
<dbReference type="PDBsum" id="4U3M"/>
<dbReference type="PDBsum" id="4U3N"/>
<dbReference type="PDBsum" id="4U3U"/>
<dbReference type="PDBsum" id="4U4N"/>
<dbReference type="PDBsum" id="4U4O"/>
<dbReference type="PDBsum" id="4U4Q"/>
<dbReference type="PDBsum" id="4U4R"/>
<dbReference type="PDBsum" id="4U4U"/>
<dbReference type="PDBsum" id="4U4Y"/>
<dbReference type="PDBsum" id="4U4Z"/>
<dbReference type="PDBsum" id="4U50"/>
<dbReference type="PDBsum" id="4U51"/>
<dbReference type="PDBsum" id="4U52"/>
<dbReference type="PDBsum" id="4U53"/>
<dbReference type="PDBsum" id="4U55"/>
<dbReference type="PDBsum" id="4U56"/>
<dbReference type="PDBsum" id="4U6F"/>
<dbReference type="PDBsum" id="4V5Z"/>
<dbReference type="PDBsum" id="4V6I"/>
<dbReference type="PDBsum" id="4V7F"/>
<dbReference type="PDBsum" id="4V7R"/>
<dbReference type="PDBsum" id="4V88"/>
<dbReference type="PDBsum" id="4V8T"/>
<dbReference type="PDBsum" id="4V8Y"/>
<dbReference type="PDBsum" id="4V8Z"/>
<dbReference type="PDBsum" id="4V91"/>
<dbReference type="PDBsum" id="5APN"/>
<dbReference type="PDBsum" id="5APO"/>
<dbReference type="PDBsum" id="5DAT"/>
<dbReference type="PDBsum" id="5DC3"/>
<dbReference type="PDBsum" id="5DGE"/>
<dbReference type="PDBsum" id="5DGF"/>
<dbReference type="PDBsum" id="5DGV"/>
<dbReference type="PDBsum" id="5FCI"/>
<dbReference type="PDBsum" id="5FCJ"/>
<dbReference type="PDBsum" id="5GAK"/>
<dbReference type="PDBsum" id="5H4P"/>
<dbReference type="PDBsum" id="5I4L"/>
<dbReference type="PDBsum" id="5JCS"/>
<dbReference type="PDBsum" id="5JUO"/>
<dbReference type="PDBsum" id="5JUP"/>
<dbReference type="PDBsum" id="5JUS"/>
<dbReference type="PDBsum" id="5JUT"/>
<dbReference type="PDBsum" id="5JUU"/>
<dbReference type="PDBsum" id="5LYB"/>
<dbReference type="PDBsum" id="5M1J"/>
<dbReference type="PDBsum" id="5MC6"/>
<dbReference type="PDBsum" id="5MEI"/>
<dbReference type="PDBsum" id="5NDG"/>
<dbReference type="PDBsum" id="5NDV"/>
<dbReference type="PDBsum" id="5NDW"/>
<dbReference type="PDBsum" id="5OBM"/>
<dbReference type="PDBsum" id="5ON6"/>
<dbReference type="PDBsum" id="5T62"/>
<dbReference type="PDBsum" id="5T6R"/>
<dbReference type="PDBsum" id="5TBW"/>
<dbReference type="PDBsum" id="5TGA"/>
<dbReference type="PDBsum" id="5TGM"/>
<dbReference type="PDBsum" id="6CB1"/>
<dbReference type="PDBsum" id="6ELZ"/>
<dbReference type="PDBsum" id="6EM5"/>
<dbReference type="PDBsum" id="6FT6"/>
<dbReference type="PDBsum" id="6GQ1"/>
<dbReference type="PDBsum" id="6GQB"/>
<dbReference type="PDBsum" id="6GQV"/>
<dbReference type="PDBsum" id="6HD7"/>
<dbReference type="PDBsum" id="6HHQ"/>
<dbReference type="PDBsum" id="6I7O"/>
<dbReference type="PDBsum" id="6M62"/>
<dbReference type="PDBsum" id="6N8J"/>
<dbReference type="PDBsum" id="6N8K"/>
<dbReference type="PDBsum" id="6N8L"/>
<dbReference type="PDBsum" id="6N8M"/>
<dbReference type="PDBsum" id="6N8N"/>
<dbReference type="PDBsum" id="6N8O"/>
<dbReference type="PDBsum" id="6OIG"/>
<dbReference type="PDBsum" id="6Q8Y"/>
<dbReference type="PDBsum" id="6QIK"/>
<dbReference type="PDBsum" id="6QT0"/>
<dbReference type="PDBsum" id="6QTZ"/>
<dbReference type="PDBsum" id="6R84"/>
<dbReference type="PDBsum" id="6R86"/>
<dbReference type="PDBsum" id="6R87"/>
<dbReference type="PDBsum" id="6RI5"/>
<dbReference type="PDBsum" id="6RZZ"/>
<dbReference type="PDBsum" id="6S05"/>
<dbReference type="PDBsum" id="6S47"/>
<dbReference type="PDBsum" id="6SNT"/>
<dbReference type="PDBsum" id="6SV4"/>
<dbReference type="PDBsum" id="6T4Q"/>
<dbReference type="PDBsum" id="6T7I"/>
<dbReference type="PDBsum" id="6T7T"/>
<dbReference type="PDBsum" id="6T83"/>
<dbReference type="PDBsum" id="6TB3"/>
<dbReference type="PDBsum" id="6TNU"/>
<dbReference type="PDBsum" id="6WOO"/>
<dbReference type="PDBsum" id="6XIQ"/>
<dbReference type="PDBsum" id="6XIR"/>
<dbReference type="PDBsum" id="6YLG"/>
<dbReference type="PDBsum" id="6YLH"/>
<dbReference type="PDBsum" id="6YLX"/>
<dbReference type="PDBsum" id="6YLY"/>
<dbReference type="PDBsum" id="6Z6J"/>
<dbReference type="PDBsum" id="6Z6K"/>
<dbReference type="PDBsum" id="7B7D"/>
<dbReference type="PDBsum" id="7BT6"/>
<dbReference type="PDBsum" id="7BTB"/>
<dbReference type="PDBsum" id="7MPI"/>
<dbReference type="PDBsum" id="7MPJ"/>
<dbReference type="PDBsum" id="7N8B"/>
<dbReference type="PDBsum" id="7NAC"/>
<dbReference type="PDBsum" id="7NAD"/>
<dbReference type="PDBsum" id="7NAF"/>
<dbReference type="PDBsum" id="7NRC"/>
<dbReference type="PDBsum" id="7NRD"/>
<dbReference type="PDBsum" id="7OF1"/>
<dbReference type="PDBsum" id="7OH3"/>
<dbReference type="PDBsum" id="7OHQ"/>
<dbReference type="PDBsum" id="7OHR"/>
<dbReference type="PDBsum" id="7R72"/>
<dbReference type="PDBsum" id="7R7A"/>
<dbReference type="PDBsum" id="7RR5"/>
<dbReference type="PDBsum" id="7TOO"/>
<dbReference type="PDBsum" id="7TOP"/>
<dbReference type="PDBsum" id="7U0H"/>
<dbReference type="PDBsum" id="7UG6"/>
<dbReference type="PDBsum" id="7UOO"/>
<dbReference type="PDBsum" id="7UQB"/>
<dbReference type="PDBsum" id="7UQZ"/>
<dbReference type="PDBsum" id="7V08"/>
<dbReference type="PDBsum" id="7Z34"/>
<dbReference type="PDBsum" id="7ZPQ"/>
<dbReference type="PDBsum" id="7ZRS"/>
<dbReference type="PDBsum" id="7ZS5"/>
<dbReference type="PDBsum" id="7ZUW"/>
<dbReference type="PDBsum" id="7ZUX"/>
<dbReference type="PDBsum" id="7ZW0"/>
<dbReference type="PDBsum" id="8AAF"/>
<dbReference type="PDBsum" id="8AGT"/>
<dbReference type="PDBsum" id="8AGU"/>
<dbReference type="PDBsum" id="8AGV"/>
<dbReference type="PDBsum" id="8AGW"/>
<dbReference type="PDBsum" id="8AGX"/>
<dbReference type="PDBsum" id="8AGZ"/>
<dbReference type="PDBsum" id="8BIP"/>
<dbReference type="PDBsum" id="8BJQ"/>
<dbReference type="PDBsum" id="8BN3"/>
<dbReference type="PDBsum" id="8BQD"/>
<dbReference type="PDBsum" id="8BQX"/>
<dbReference type="PDBsum" id="8CCS"/>
<dbReference type="PDBsum" id="8CDL"/>
<dbReference type="PDBsum" id="8CDR"/>
<dbReference type="PDBsum" id="8CEH"/>
<dbReference type="PDBsum" id="8CF5"/>
<dbReference type="PDBsum" id="8CG8"/>
<dbReference type="PDBsum" id="8CGN"/>
<dbReference type="PDBsum" id="8CIV"/>
<dbReference type="PDBsum" id="8CKU"/>
<dbReference type="PDBsum" id="8CMJ"/>
<dbReference type="PDBsum" id="8EUB"/>
<dbReference type="PDBsum" id="8EVP"/>
<dbReference type="PDBsum" id="8EVQ"/>
<dbReference type="PDBsum" id="8EVR"/>
<dbReference type="PDBsum" id="8EVS"/>
<dbReference type="PDBsum" id="8EVT"/>
<dbReference type="PDBsum" id="8EWB"/>
<dbReference type="PDBsum" id="8EWC"/>
<dbReference type="PDBsum" id="8HFR"/>
<dbReference type="PDBsum" id="8K2D"/>
<dbReference type="PDBsum" id="8K82"/>
<dbReference type="PDBsum" id="8P4V"/>
<dbReference type="PDBsum" id="8P8M"/>
<dbReference type="PDBsum" id="8P8N"/>
<dbReference type="PDBsum" id="8P8U"/>
<dbReference type="PDBsum" id="8P9A"/>
<dbReference type="PDBsum" id="8PFR"/>
<dbReference type="PDBsum" id="8T2X"/>
<dbReference type="PDBsum" id="8T2Y"/>
<dbReference type="PDBsum" id="8T2Z"/>
<dbReference type="PDBsum" id="8T30"/>
<dbReference type="PDBsum" id="8T3A"/>
<dbReference type="PDBsum" id="8T3B"/>
<dbReference type="PDBsum" id="8T3C"/>
<dbReference type="PDBsum" id="8T3D"/>
<dbReference type="PDBsum" id="8T3E"/>
<dbReference type="PDBsum" id="8T3F"/>
<dbReference type="PDBsum" id="8UT0"/>
<dbReference type="PDBsum" id="8UTI"/>
<dbReference type="PDBsum" id="8V87"/>
<dbReference type="PDBsum" id="8XU8"/>
<dbReference type="PDBsum" id="8Y0U"/>
<dbReference type="PDBsum" id="8YLD"/>
<dbReference type="PDBsum" id="8YLR"/>
<dbReference type="PDBsum" id="8Z70"/>
<dbReference type="PDBsum" id="8Z71"/>
<dbReference type="PDBsum" id="9F9S"/>
<dbReference type="BMRB" id="P14120"/>
<dbReference type="EMDB" id="EMD-0047"/>
<dbReference type="EMDB" id="EMD-0048"/>
<dbReference type="EMDB" id="EMD-0049"/>
<dbReference type="EMDB" id="EMD-0202"/>
<dbReference type="EMDB" id="EMD-0369"/>
<dbReference type="EMDB" id="EMD-0370"/>
<dbReference type="EMDB" id="EMD-0371"/>
<dbReference type="EMDB" id="EMD-0372"/>
<dbReference type="EMDB" id="EMD-0373"/>
<dbReference type="EMDB" id="EMD-0374"/>
<dbReference type="EMDB" id="EMD-10068"/>
<dbReference type="EMDB" id="EMD-10071"/>
<dbReference type="EMDB" id="EMD-10098"/>
<dbReference type="EMDB" id="EMD-10262"/>
<dbReference type="EMDB" id="EMD-10315"/>
<dbReference type="EMDB" id="EMD-10377"/>
<dbReference type="EMDB" id="EMD-10396"/>
<dbReference type="EMDB" id="EMD-10397"/>
<dbReference type="EMDB" id="EMD-10398"/>
<dbReference type="EMDB" id="EMD-10431"/>
<dbReference type="EMDB" id="EMD-10537"/>
<dbReference type="EMDB" id="EMD-10838"/>
<dbReference type="EMDB" id="EMD-10839"/>
<dbReference type="EMDB" id="EMD-10841"/>
<dbReference type="EMDB" id="EMD-10842"/>
<dbReference type="EMDB" id="EMD-11096"/>
<dbReference type="EMDB" id="EMD-11097"/>
<dbReference type="EMDB" id="EMD-12081"/>
<dbReference type="EMDB" id="EMD-12534"/>
<dbReference type="EMDB" id="EMD-12535"/>
<dbReference type="EMDB" id="EMD-12866"/>
<dbReference type="EMDB" id="EMD-12892"/>
<dbReference type="EMDB" id="EMD-12905"/>
<dbReference type="EMDB" id="EMD-12906"/>
<dbReference type="EMDB" id="EMD-14471"/>
<dbReference type="EMDB" id="EMD-14861"/>
<dbReference type="EMDB" id="EMD-14921"/>
<dbReference type="EMDB" id="EMD-14926"/>
<dbReference type="EMDB" id="EMD-14978"/>
<dbReference type="EMDB" id="EMD-14979"/>
<dbReference type="EMDB" id="EMD-14990"/>
<dbReference type="EMDB" id="EMD-15296"/>
<dbReference type="EMDB" id="EMD-15423"/>
<dbReference type="EMDB" id="EMD-15424"/>
<dbReference type="EMDB" id="EMD-15425"/>
<dbReference type="EMDB" id="EMD-15426"/>
<dbReference type="EMDB" id="EMD-15427"/>
<dbReference type="EMDB" id="EMD-15428"/>
<dbReference type="EMDB" id="EMD-16086"/>
<dbReference type="EMDB" id="EMD-16090"/>
<dbReference type="EMDB" id="EMD-16127"/>
<dbReference type="EMDB" id="EMD-16182"/>
<dbReference type="EMDB" id="EMD-16563"/>
<dbReference type="EMDB" id="EMD-16591"/>
<dbReference type="EMDB" id="EMD-16594"/>
<dbReference type="EMDB" id="EMD-16609"/>
<dbReference type="EMDB" id="EMD-16616"/>
<dbReference type="EMDB" id="EMD-16634"/>
<dbReference type="EMDB" id="EMD-16648"/>
<dbReference type="EMDB" id="EMD-16684"/>
<dbReference type="EMDB" id="EMD-16702"/>
<dbReference type="EMDB" id="EMD-16729"/>
<dbReference type="EMDB" id="EMD-17549"/>
<dbReference type="EMDB" id="EMD-17550"/>
<dbReference type="EMDB" id="EMD-17552"/>
<dbReference type="EMDB" id="EMD-17653"/>
<dbReference type="EMDB" id="EMD-20077"/>
<dbReference type="EMDB" id="EMD-21859"/>
<dbReference type="EMDB" id="EMD-22196"/>
<dbReference type="EMDB" id="EMD-22198"/>
<dbReference type="EMDB" id="EMD-23934"/>
<dbReference type="EMDB" id="EMD-23935"/>
<dbReference type="EMDB" id="EMD-24235"/>
<dbReference type="EMDB" id="EMD-24269"/>
<dbReference type="EMDB" id="EMD-24270"/>
<dbReference type="EMDB" id="EMD-24271"/>
<dbReference type="EMDB" id="EMD-24290"/>
<dbReference type="EMDB" id="EMD-24296"/>
<dbReference type="EMDB" id="EMD-24652"/>
<dbReference type="EMDB" id="EMD-26033"/>
<dbReference type="EMDB" id="EMD-26034"/>
<dbReference type="EMDB" id="EMD-26259"/>
<dbReference type="EMDB" id="EMD-26485"/>
<dbReference type="EMDB" id="EMD-26651"/>
<dbReference type="EMDB" id="EMD-26686"/>
<dbReference type="EMDB" id="EMD-26703"/>
<dbReference type="EMDB" id="EMD-26941"/>
<dbReference type="EMDB" id="EMD-28610"/>
<dbReference type="EMDB" id="EMD-28632"/>
<dbReference type="EMDB" id="EMD-28633"/>
<dbReference type="EMDB" id="EMD-28634"/>
<dbReference type="EMDB" id="EMD-28635"/>
<dbReference type="EMDB" id="EMD-28636"/>
<dbReference type="EMDB" id="EMD-28642"/>
<dbReference type="EMDB" id="EMD-28643"/>
<dbReference type="EMDB" id="EMD-30108"/>
<dbReference type="EMDB" id="EMD-30170"/>
<dbReference type="EMDB" id="EMD-30174"/>
<dbReference type="EMDB" id="EMD-3461"/>
<dbReference type="EMDB" id="EMD-34725"/>
<dbReference type="EMDB" id="EMD-36839"/>
<dbReference type="EMDB" id="EMD-36945"/>
<dbReference type="EMDB" id="EMD-38660"/>
<dbReference type="EMDB" id="EMD-40990"/>
<dbReference type="EMDB" id="EMD-40991"/>
<dbReference type="EMDB" id="EMD-40992"/>
<dbReference type="EMDB" id="EMD-40993"/>
<dbReference type="EMDB" id="EMD-40997"/>
<dbReference type="EMDB" id="EMD-40998"/>
<dbReference type="EMDB" id="EMD-40999"/>
<dbReference type="EMDB" id="EMD-41000"/>
<dbReference type="EMDB" id="EMD-41001"/>
<dbReference type="EMDB" id="EMD-41002"/>
<dbReference type="EMDB" id="EMD-4140"/>
<dbReference type="EMDB" id="EMD-42525"/>
<dbReference type="EMDB" id="EMD-42540"/>
<dbReference type="EMDB" id="EMD-4302"/>
<dbReference type="EMDB" id="EMD-43027"/>
<dbReference type="EMDB" id="EMD-4427"/>
<dbReference type="EMDB" id="EMD-4474"/>
<dbReference type="EMDB" id="EMD-4560"/>
<dbReference type="EMDB" id="EMD-4630"/>
<dbReference type="EMDB" id="EMD-4636"/>
<dbReference type="EMDB" id="EMD-4751"/>
<dbReference type="EMDB" id="EMD-4752"/>
<dbReference type="EMDB" id="EMD-4753"/>
<dbReference type="EMDB" id="EMD-4884"/>
<dbReference type="EMDB" id="EMD-50259"/>
<dbReference type="EMDB" id="EMD-7445"/>
<dbReference type="EMDB" id="EMD-8362"/>
<dbReference type="EMDB" id="EMD-8368"/>
<dbReference type="SMR" id="P14120"/>
<dbReference type="BioGRID" id="33216">
    <property type="interactions" value="212"/>
</dbReference>
<dbReference type="ComplexPortal" id="CPX-1601">
    <property type="entry name" value="60S cytosolic large ribosomal subunit"/>
</dbReference>
<dbReference type="DIP" id="DIP-1891N"/>
<dbReference type="FunCoup" id="P14120">
    <property type="interactions" value="1560"/>
</dbReference>
<dbReference type="IntAct" id="P14120">
    <property type="interactions" value="155"/>
</dbReference>
<dbReference type="MINT" id="P14120"/>
<dbReference type="STRING" id="4932.YGL030W"/>
<dbReference type="MoonProt" id="P14120"/>
<dbReference type="iPTMnet" id="P14120"/>
<dbReference type="PaxDb" id="4932-YGL030W"/>
<dbReference type="PeptideAtlas" id="P14120"/>
<dbReference type="TopDownProteomics" id="P14120"/>
<dbReference type="EnsemblFungi" id="YGL030W_mRNA">
    <property type="protein sequence ID" value="YGL030W"/>
    <property type="gene ID" value="YGL030W"/>
</dbReference>
<dbReference type="GeneID" id="852853"/>
<dbReference type="KEGG" id="sce:YGL030W"/>
<dbReference type="AGR" id="SGD:S000002998"/>
<dbReference type="SGD" id="S000002998">
    <property type="gene designation" value="RPL30"/>
</dbReference>
<dbReference type="VEuPathDB" id="FungiDB:YGL030W"/>
<dbReference type="eggNOG" id="KOG2988">
    <property type="taxonomic scope" value="Eukaryota"/>
</dbReference>
<dbReference type="GeneTree" id="ENSGT00390000012138"/>
<dbReference type="HOGENOM" id="CLU_130502_0_1_1"/>
<dbReference type="InParanoid" id="P14120"/>
<dbReference type="OMA" id="YFQGGNN"/>
<dbReference type="OrthoDB" id="1928736at2759"/>
<dbReference type="BioCyc" id="YEAST:G3O-30546-MONOMER"/>
<dbReference type="Reactome" id="R-SCE-156827">
    <property type="pathway name" value="L13a-mediated translational silencing of Ceruloplasmin expression"/>
</dbReference>
<dbReference type="Reactome" id="R-SCE-1799339">
    <property type="pathway name" value="SRP-dependent cotranslational protein targeting to membrane"/>
</dbReference>
<dbReference type="Reactome" id="R-SCE-72689">
    <property type="pathway name" value="Formation of a pool of free 40S subunits"/>
</dbReference>
<dbReference type="Reactome" id="R-SCE-72706">
    <property type="pathway name" value="GTP hydrolysis and joining of the 60S ribosomal subunit"/>
</dbReference>
<dbReference type="Reactome" id="R-SCE-975956">
    <property type="pathway name" value="Nonsense Mediated Decay (NMD) independent of the Exon Junction Complex (EJC)"/>
</dbReference>
<dbReference type="Reactome" id="R-SCE-975957">
    <property type="pathway name" value="Nonsense Mediated Decay (NMD) enhanced by the Exon Junction Complex (EJC)"/>
</dbReference>
<dbReference type="BioGRID-ORCS" id="852853">
    <property type="hits" value="0 hits in 10 CRISPR screens"/>
</dbReference>
<dbReference type="EvolutionaryTrace" id="P14120"/>
<dbReference type="PRO" id="PR:P14120"/>
<dbReference type="Proteomes" id="UP000002311">
    <property type="component" value="Chromosome VII"/>
</dbReference>
<dbReference type="RNAct" id="P14120">
    <property type="molecule type" value="protein"/>
</dbReference>
<dbReference type="GO" id="GO:0005737">
    <property type="term" value="C:cytoplasm"/>
    <property type="evidence" value="ECO:0000314"/>
    <property type="project" value="SGD"/>
</dbReference>
<dbReference type="GO" id="GO:0005829">
    <property type="term" value="C:cytosol"/>
    <property type="evidence" value="ECO:0000304"/>
    <property type="project" value="Reactome"/>
</dbReference>
<dbReference type="GO" id="GO:0022625">
    <property type="term" value="C:cytosolic large ribosomal subunit"/>
    <property type="evidence" value="ECO:0000314"/>
    <property type="project" value="SGD"/>
</dbReference>
<dbReference type="GO" id="GO:0030627">
    <property type="term" value="F:pre-mRNA 5'-splice site binding"/>
    <property type="evidence" value="ECO:0000315"/>
    <property type="project" value="SGD"/>
</dbReference>
<dbReference type="GO" id="GO:0003723">
    <property type="term" value="F:RNA binding"/>
    <property type="evidence" value="ECO:0000314"/>
    <property type="project" value="SGD"/>
</dbReference>
<dbReference type="GO" id="GO:0003735">
    <property type="term" value="F:structural constituent of ribosome"/>
    <property type="evidence" value="ECO:0000314"/>
    <property type="project" value="SGD"/>
</dbReference>
<dbReference type="GO" id="GO:0002181">
    <property type="term" value="P:cytoplasmic translation"/>
    <property type="evidence" value="ECO:0000303"/>
    <property type="project" value="ComplexPortal"/>
</dbReference>
<dbReference type="GO" id="GO:0048025">
    <property type="term" value="P:negative regulation of mRNA splicing, via spliceosome"/>
    <property type="evidence" value="ECO:0000315"/>
    <property type="project" value="SGD"/>
</dbReference>
<dbReference type="GO" id="GO:0006364">
    <property type="term" value="P:rRNA processing"/>
    <property type="evidence" value="ECO:0000315"/>
    <property type="project" value="SGD"/>
</dbReference>
<dbReference type="FunFam" id="3.30.1330.30:FF:000001">
    <property type="entry name" value="60S ribosomal protein L30"/>
    <property type="match status" value="1"/>
</dbReference>
<dbReference type="Gene3D" id="3.30.1330.30">
    <property type="match status" value="1"/>
</dbReference>
<dbReference type="InterPro" id="IPR039109">
    <property type="entry name" value="Ribosomal_eL30-like"/>
</dbReference>
<dbReference type="InterPro" id="IPR029064">
    <property type="entry name" value="Ribosomal_eL30-like_sf"/>
</dbReference>
<dbReference type="InterPro" id="IPR022991">
    <property type="entry name" value="Ribosomal_eL30_CS"/>
</dbReference>
<dbReference type="InterPro" id="IPR004038">
    <property type="entry name" value="Ribosomal_eL8/eL30/eS12/Gad45"/>
</dbReference>
<dbReference type="NCBIfam" id="NF002172">
    <property type="entry name" value="PRK01018.1"/>
    <property type="match status" value="1"/>
</dbReference>
<dbReference type="PANTHER" id="PTHR11449">
    <property type="entry name" value="RIBOSOMAL PROTEIN L30"/>
    <property type="match status" value="1"/>
</dbReference>
<dbReference type="Pfam" id="PF01248">
    <property type="entry name" value="Ribosomal_L7Ae"/>
    <property type="match status" value="1"/>
</dbReference>
<dbReference type="SUPFAM" id="SSF55315">
    <property type="entry name" value="L30e-like"/>
    <property type="match status" value="1"/>
</dbReference>
<dbReference type="PROSITE" id="PS00709">
    <property type="entry name" value="RIBOSOMAL_L30E_1"/>
    <property type="match status" value="1"/>
</dbReference>
<dbReference type="PROSITE" id="PS00993">
    <property type="entry name" value="RIBOSOMAL_L30E_2"/>
    <property type="match status" value="1"/>
</dbReference>
<gene>
    <name evidence="6" type="primary">RPL30</name>
    <name type="synonym">RPL32</name>
    <name type="ordered locus">YGL030W</name>
</gene>
<proteinExistence type="evidence at protein level"/>
<organism>
    <name type="scientific">Saccharomyces cerevisiae (strain ATCC 204508 / S288c)</name>
    <name type="common">Baker's yeast</name>
    <dbReference type="NCBI Taxonomy" id="559292"/>
    <lineage>
        <taxon>Eukaryota</taxon>
        <taxon>Fungi</taxon>
        <taxon>Dikarya</taxon>
        <taxon>Ascomycota</taxon>
        <taxon>Saccharomycotina</taxon>
        <taxon>Saccharomycetes</taxon>
        <taxon>Saccharomycetales</taxon>
        <taxon>Saccharomycetaceae</taxon>
        <taxon>Saccharomyces</taxon>
    </lineage>
</organism>
<accession>P14120</accession>
<accession>D6VUA8</accession>
<protein>
    <recommendedName>
        <fullName evidence="5">Large ribosomal subunit protein eL30</fullName>
    </recommendedName>
    <alternativeName>
        <fullName evidence="6">60S ribosomal protein L30</fullName>
    </alternativeName>
    <alternativeName>
        <fullName>L32</fullName>
    </alternativeName>
    <alternativeName>
        <fullName>RP73</fullName>
    </alternativeName>
    <alternativeName>
        <fullName>YL38</fullName>
    </alternativeName>
</protein>
<evidence type="ECO:0000269" key="1">
    <source>
    </source>
</evidence>
<evidence type="ECO:0000269" key="2">
    <source>
    </source>
</evidence>
<evidence type="ECO:0000269" key="3">
    <source>
    </source>
</evidence>
<evidence type="ECO:0000269" key="4">
    <source>
    </source>
</evidence>
<evidence type="ECO:0000303" key="5">
    <source>
    </source>
</evidence>
<evidence type="ECO:0000303" key="6">
    <source>
    </source>
</evidence>
<evidence type="ECO:0000305" key="7"/>
<evidence type="ECO:0000305" key="8">
    <source>
    </source>
</evidence>
<evidence type="ECO:0000305" key="9">
    <source>
    </source>
</evidence>
<evidence type="ECO:0007744" key="10">
    <source>
    </source>
</evidence>
<evidence type="ECO:0007829" key="11">
    <source>
        <dbReference type="PDB" id="1NMU"/>
    </source>
</evidence>
<evidence type="ECO:0007829" key="12">
    <source>
        <dbReference type="PDB" id="7NAF"/>
    </source>
</evidence>